<sequence>MNFQTISINLTEGKILVFETGKIARQANGAVLVRSGETCVFASACAVDLDDKVDFLPLRVDYQEKFSSTGKTLGGFIKREGRPSEKEILVSRLIDRSLRPSFPYRLMQDVQVLSYVWSYDGQVLPDPLAICAASAALAISDIPQSNIVAGVRIGCIDNQWVINPTKTELASSTLDLVLAGTENAILMIEGHCDFFTEEQVLDAIEFGHKHIVTICKRLQLWQEEVGKSKNLSAVYPLPAEVLTAVKECAQDKFTELFNIKDKKVHAATAHEIEENILEKLQREDDDLFSSFNIKAACKTLKSDTMRALIRDREIRADGRSLTTVRPITIETSYLPRTHGSCLFTRGETQTLAVCTLGSEAMAQRYEDLNGEGLSKFYLQYFFPPFSVGEVGRIGSPGRREIGHGKLAEKALSHALPDSATFPYTIRIESNITESNGSSSMASVCGGCLALMDAGVPISSPIAGIAMGLILDDQGAIILSDISGLEDHLGDMDFKIAGSGKGITAFQMDIKVEGITPAIMKKALSQAKQGCNDILNIMNEALSAPKADLSQYAPRIETMQIKPTKIASVIGPGGKQIRQIIEETGVQIDVNDLGVVSISASSASAINKAKEIIEGLVGEVEVGKTYRGRVTSVVAFGAFVEVLPGKEGLCHISECSRQRIENISDVVKEGDIIDVKLLSINEKGQLKLSHKATLE</sequence>
<protein>
    <recommendedName>
        <fullName evidence="1">Polyribonucleotide nucleotidyltransferase</fullName>
        <ecNumber evidence="1">2.7.7.8</ecNumber>
    </recommendedName>
    <alternativeName>
        <fullName evidence="1">Polynucleotide phosphorylase</fullName>
        <shortName evidence="1">PNPase</shortName>
    </alternativeName>
</protein>
<gene>
    <name evidence="1" type="primary">pnp</name>
    <name type="ordered locus">CPn_0999</name>
    <name type="ordered locus">CP_0855</name>
    <name type="ordered locus">CpB1037</name>
</gene>
<dbReference type="EC" id="2.7.7.8" evidence="1"/>
<dbReference type="EMBL" id="AE001363">
    <property type="protein sequence ID" value="AAD19136.1"/>
    <property type="molecule type" value="Genomic_DNA"/>
</dbReference>
<dbReference type="EMBL" id="AE002161">
    <property type="protein sequence ID" value="AAF38644.1"/>
    <property type="molecule type" value="Genomic_DNA"/>
</dbReference>
<dbReference type="EMBL" id="BA000008">
    <property type="protein sequence ID" value="BAA99206.1"/>
    <property type="molecule type" value="Genomic_DNA"/>
</dbReference>
<dbReference type="EMBL" id="AE009440">
    <property type="protein sequence ID" value="AAP98966.1"/>
    <property type="molecule type" value="Genomic_DNA"/>
</dbReference>
<dbReference type="PIR" id="D86615">
    <property type="entry name" value="D86615"/>
</dbReference>
<dbReference type="PIR" id="G72009">
    <property type="entry name" value="G72009"/>
</dbReference>
<dbReference type="RefSeq" id="NP_225193.1">
    <property type="nucleotide sequence ID" value="NC_000922.1"/>
</dbReference>
<dbReference type="RefSeq" id="WP_010883632.1">
    <property type="nucleotide sequence ID" value="NZ_LN847257.1"/>
</dbReference>
<dbReference type="SMR" id="Q9Z6R0"/>
<dbReference type="STRING" id="406984.CPK_ORF00424"/>
<dbReference type="GeneID" id="45051056"/>
<dbReference type="KEGG" id="cpa:CP_0855"/>
<dbReference type="KEGG" id="cpj:pnp"/>
<dbReference type="KEGG" id="cpn:CPn_0999"/>
<dbReference type="KEGG" id="cpt:CpB1037"/>
<dbReference type="PATRIC" id="fig|115713.3.peg.1094"/>
<dbReference type="eggNOG" id="COG1185">
    <property type="taxonomic scope" value="Bacteria"/>
</dbReference>
<dbReference type="HOGENOM" id="CLU_004217_2_2_0"/>
<dbReference type="OrthoDB" id="9804305at2"/>
<dbReference type="Proteomes" id="UP000000583">
    <property type="component" value="Chromosome"/>
</dbReference>
<dbReference type="Proteomes" id="UP000000801">
    <property type="component" value="Chromosome"/>
</dbReference>
<dbReference type="GO" id="GO:0005829">
    <property type="term" value="C:cytosol"/>
    <property type="evidence" value="ECO:0007669"/>
    <property type="project" value="TreeGrafter"/>
</dbReference>
<dbReference type="GO" id="GO:0000175">
    <property type="term" value="F:3'-5'-RNA exonuclease activity"/>
    <property type="evidence" value="ECO:0007669"/>
    <property type="project" value="TreeGrafter"/>
</dbReference>
<dbReference type="GO" id="GO:0000287">
    <property type="term" value="F:magnesium ion binding"/>
    <property type="evidence" value="ECO:0007669"/>
    <property type="project" value="UniProtKB-UniRule"/>
</dbReference>
<dbReference type="GO" id="GO:0004654">
    <property type="term" value="F:polyribonucleotide nucleotidyltransferase activity"/>
    <property type="evidence" value="ECO:0007669"/>
    <property type="project" value="UniProtKB-UniRule"/>
</dbReference>
<dbReference type="GO" id="GO:0003723">
    <property type="term" value="F:RNA binding"/>
    <property type="evidence" value="ECO:0007669"/>
    <property type="project" value="UniProtKB-UniRule"/>
</dbReference>
<dbReference type="GO" id="GO:0006402">
    <property type="term" value="P:mRNA catabolic process"/>
    <property type="evidence" value="ECO:0007669"/>
    <property type="project" value="UniProtKB-UniRule"/>
</dbReference>
<dbReference type="GO" id="GO:0006396">
    <property type="term" value="P:RNA processing"/>
    <property type="evidence" value="ECO:0007669"/>
    <property type="project" value="InterPro"/>
</dbReference>
<dbReference type="CDD" id="cd02393">
    <property type="entry name" value="KH-I_PNPase"/>
    <property type="match status" value="1"/>
</dbReference>
<dbReference type="CDD" id="cd11364">
    <property type="entry name" value="RNase_PH_PNPase_2"/>
    <property type="match status" value="1"/>
</dbReference>
<dbReference type="CDD" id="cd04472">
    <property type="entry name" value="S1_PNPase"/>
    <property type="match status" value="1"/>
</dbReference>
<dbReference type="FunFam" id="3.30.1370.10:FF:000001">
    <property type="entry name" value="Polyribonucleotide nucleotidyltransferase"/>
    <property type="match status" value="1"/>
</dbReference>
<dbReference type="FunFam" id="3.30.230.70:FF:000001">
    <property type="entry name" value="Polyribonucleotide nucleotidyltransferase"/>
    <property type="match status" value="1"/>
</dbReference>
<dbReference type="FunFam" id="3.30.230.70:FF:000002">
    <property type="entry name" value="Polyribonucleotide nucleotidyltransferase"/>
    <property type="match status" value="1"/>
</dbReference>
<dbReference type="FunFam" id="2.40.50.140:FF:000189">
    <property type="entry name" value="Polyribonucleotide nucleotidyltransferase, putative"/>
    <property type="match status" value="1"/>
</dbReference>
<dbReference type="Gene3D" id="3.30.230.70">
    <property type="entry name" value="GHMP Kinase, N-terminal domain"/>
    <property type="match status" value="2"/>
</dbReference>
<dbReference type="Gene3D" id="3.30.1370.10">
    <property type="entry name" value="K Homology domain, type 1"/>
    <property type="match status" value="1"/>
</dbReference>
<dbReference type="Gene3D" id="2.40.50.140">
    <property type="entry name" value="Nucleic acid-binding proteins"/>
    <property type="match status" value="1"/>
</dbReference>
<dbReference type="HAMAP" id="MF_01595">
    <property type="entry name" value="PNPase"/>
    <property type="match status" value="1"/>
</dbReference>
<dbReference type="InterPro" id="IPR001247">
    <property type="entry name" value="ExoRNase_PH_dom1"/>
</dbReference>
<dbReference type="InterPro" id="IPR015847">
    <property type="entry name" value="ExoRNase_PH_dom2"/>
</dbReference>
<dbReference type="InterPro" id="IPR036345">
    <property type="entry name" value="ExoRNase_PH_dom2_sf"/>
</dbReference>
<dbReference type="InterPro" id="IPR004087">
    <property type="entry name" value="KH_dom"/>
</dbReference>
<dbReference type="InterPro" id="IPR004088">
    <property type="entry name" value="KH_dom_type_1"/>
</dbReference>
<dbReference type="InterPro" id="IPR036612">
    <property type="entry name" value="KH_dom_type_1_sf"/>
</dbReference>
<dbReference type="InterPro" id="IPR012340">
    <property type="entry name" value="NA-bd_OB-fold"/>
</dbReference>
<dbReference type="InterPro" id="IPR012162">
    <property type="entry name" value="PNPase"/>
</dbReference>
<dbReference type="InterPro" id="IPR027408">
    <property type="entry name" value="PNPase/RNase_PH_dom_sf"/>
</dbReference>
<dbReference type="InterPro" id="IPR015848">
    <property type="entry name" value="PNPase_PH_RNA-bd_bac/org-type"/>
</dbReference>
<dbReference type="InterPro" id="IPR036456">
    <property type="entry name" value="PNPase_PH_RNA-bd_sf"/>
</dbReference>
<dbReference type="InterPro" id="IPR020568">
    <property type="entry name" value="Ribosomal_Su5_D2-typ_SF"/>
</dbReference>
<dbReference type="InterPro" id="IPR003029">
    <property type="entry name" value="S1_domain"/>
</dbReference>
<dbReference type="NCBIfam" id="TIGR03591">
    <property type="entry name" value="polynuc_phos"/>
    <property type="match status" value="1"/>
</dbReference>
<dbReference type="NCBIfam" id="NF008805">
    <property type="entry name" value="PRK11824.1"/>
    <property type="match status" value="1"/>
</dbReference>
<dbReference type="PANTHER" id="PTHR11252">
    <property type="entry name" value="POLYRIBONUCLEOTIDE NUCLEOTIDYLTRANSFERASE"/>
    <property type="match status" value="1"/>
</dbReference>
<dbReference type="PANTHER" id="PTHR11252:SF0">
    <property type="entry name" value="POLYRIBONUCLEOTIDE NUCLEOTIDYLTRANSFERASE 1, MITOCHONDRIAL"/>
    <property type="match status" value="1"/>
</dbReference>
<dbReference type="Pfam" id="PF00013">
    <property type="entry name" value="KH_1"/>
    <property type="match status" value="1"/>
</dbReference>
<dbReference type="Pfam" id="PF03726">
    <property type="entry name" value="PNPase"/>
    <property type="match status" value="1"/>
</dbReference>
<dbReference type="Pfam" id="PF01138">
    <property type="entry name" value="RNase_PH"/>
    <property type="match status" value="2"/>
</dbReference>
<dbReference type="Pfam" id="PF03725">
    <property type="entry name" value="RNase_PH_C"/>
    <property type="match status" value="2"/>
</dbReference>
<dbReference type="Pfam" id="PF00575">
    <property type="entry name" value="S1"/>
    <property type="match status" value="1"/>
</dbReference>
<dbReference type="PIRSF" id="PIRSF005499">
    <property type="entry name" value="PNPase"/>
    <property type="match status" value="1"/>
</dbReference>
<dbReference type="SMART" id="SM00322">
    <property type="entry name" value="KH"/>
    <property type="match status" value="1"/>
</dbReference>
<dbReference type="SMART" id="SM00316">
    <property type="entry name" value="S1"/>
    <property type="match status" value="1"/>
</dbReference>
<dbReference type="SUPFAM" id="SSF54791">
    <property type="entry name" value="Eukaryotic type KH-domain (KH-domain type I)"/>
    <property type="match status" value="1"/>
</dbReference>
<dbReference type="SUPFAM" id="SSF50249">
    <property type="entry name" value="Nucleic acid-binding proteins"/>
    <property type="match status" value="1"/>
</dbReference>
<dbReference type="SUPFAM" id="SSF46915">
    <property type="entry name" value="Polynucleotide phosphorylase/guanosine pentaphosphate synthase (PNPase/GPSI), domain 3"/>
    <property type="match status" value="1"/>
</dbReference>
<dbReference type="SUPFAM" id="SSF55666">
    <property type="entry name" value="Ribonuclease PH domain 2-like"/>
    <property type="match status" value="2"/>
</dbReference>
<dbReference type="SUPFAM" id="SSF54211">
    <property type="entry name" value="Ribosomal protein S5 domain 2-like"/>
    <property type="match status" value="2"/>
</dbReference>
<dbReference type="PROSITE" id="PS50084">
    <property type="entry name" value="KH_TYPE_1"/>
    <property type="match status" value="1"/>
</dbReference>
<dbReference type="PROSITE" id="PS50126">
    <property type="entry name" value="S1"/>
    <property type="match status" value="1"/>
</dbReference>
<keyword id="KW-0963">Cytoplasm</keyword>
<keyword id="KW-0460">Magnesium</keyword>
<keyword id="KW-0479">Metal-binding</keyword>
<keyword id="KW-0548">Nucleotidyltransferase</keyword>
<keyword id="KW-0694">RNA-binding</keyword>
<keyword id="KW-0808">Transferase</keyword>
<accession>Q9Z6R0</accession>
<accession>Q7AHZ1</accession>
<accession>Q7DE66</accession>
<accession>Q7VPR4</accession>
<organism>
    <name type="scientific">Chlamydia pneumoniae</name>
    <name type="common">Chlamydophila pneumoniae</name>
    <dbReference type="NCBI Taxonomy" id="83558"/>
    <lineage>
        <taxon>Bacteria</taxon>
        <taxon>Pseudomonadati</taxon>
        <taxon>Chlamydiota</taxon>
        <taxon>Chlamydiia</taxon>
        <taxon>Chlamydiales</taxon>
        <taxon>Chlamydiaceae</taxon>
        <taxon>Chlamydia/Chlamydophila group</taxon>
        <taxon>Chlamydia</taxon>
    </lineage>
</organism>
<reference key="1">
    <citation type="journal article" date="1999" name="Nat. Genet.">
        <title>Comparative genomes of Chlamydia pneumoniae and C. trachomatis.</title>
        <authorList>
            <person name="Kalman S."/>
            <person name="Mitchell W.P."/>
            <person name="Marathe R."/>
            <person name="Lammel C.J."/>
            <person name="Fan J."/>
            <person name="Hyman R.W."/>
            <person name="Olinger L."/>
            <person name="Grimwood J."/>
            <person name="Davis R.W."/>
            <person name="Stephens R.S."/>
        </authorList>
    </citation>
    <scope>NUCLEOTIDE SEQUENCE [LARGE SCALE GENOMIC DNA]</scope>
    <source>
        <strain>CWL029</strain>
    </source>
</reference>
<reference key="2">
    <citation type="journal article" date="2000" name="Nucleic Acids Res.">
        <title>Genome sequences of Chlamydia trachomatis MoPn and Chlamydia pneumoniae AR39.</title>
        <authorList>
            <person name="Read T.D."/>
            <person name="Brunham R.C."/>
            <person name="Shen C."/>
            <person name="Gill S.R."/>
            <person name="Heidelberg J.F."/>
            <person name="White O."/>
            <person name="Hickey E.K."/>
            <person name="Peterson J.D."/>
            <person name="Utterback T.R."/>
            <person name="Berry K.J."/>
            <person name="Bass S."/>
            <person name="Linher K.D."/>
            <person name="Weidman J.F."/>
            <person name="Khouri H.M."/>
            <person name="Craven B."/>
            <person name="Bowman C."/>
            <person name="Dodson R.J."/>
            <person name="Gwinn M.L."/>
            <person name="Nelson W.C."/>
            <person name="DeBoy R.T."/>
            <person name="Kolonay J.F."/>
            <person name="McClarty G."/>
            <person name="Salzberg S.L."/>
            <person name="Eisen J.A."/>
            <person name="Fraser C.M."/>
        </authorList>
    </citation>
    <scope>NUCLEOTIDE SEQUENCE [LARGE SCALE GENOMIC DNA]</scope>
    <source>
        <strain>AR39</strain>
    </source>
</reference>
<reference key="3">
    <citation type="journal article" date="2000" name="Nucleic Acids Res.">
        <title>Comparison of whole genome sequences of Chlamydia pneumoniae J138 from Japan and CWL029 from USA.</title>
        <authorList>
            <person name="Shirai M."/>
            <person name="Hirakawa H."/>
            <person name="Kimoto M."/>
            <person name="Tabuchi M."/>
            <person name="Kishi F."/>
            <person name="Ouchi K."/>
            <person name="Shiba T."/>
            <person name="Ishii K."/>
            <person name="Hattori M."/>
            <person name="Kuhara S."/>
            <person name="Nakazawa T."/>
        </authorList>
    </citation>
    <scope>NUCLEOTIDE SEQUENCE [LARGE SCALE GENOMIC DNA]</scope>
    <source>
        <strain>J138</strain>
    </source>
</reference>
<reference key="4">
    <citation type="submission" date="2002-05" db="EMBL/GenBank/DDBJ databases">
        <title>The genome sequence of Chlamydia pneumoniae TW183 and comparison with other Chlamydia strains based on whole genome sequence analysis.</title>
        <authorList>
            <person name="Geng M.M."/>
            <person name="Schuhmacher A."/>
            <person name="Muehldorfer I."/>
            <person name="Bensch K.W."/>
            <person name="Schaefer K.P."/>
            <person name="Schneider S."/>
            <person name="Pohl T."/>
            <person name="Essig A."/>
            <person name="Marre R."/>
            <person name="Melchers K."/>
        </authorList>
    </citation>
    <scope>NUCLEOTIDE SEQUENCE [LARGE SCALE GENOMIC DNA]</scope>
    <source>
        <strain>TW-183</strain>
    </source>
</reference>
<proteinExistence type="inferred from homology"/>
<evidence type="ECO:0000255" key="1">
    <source>
        <dbReference type="HAMAP-Rule" id="MF_01595"/>
    </source>
</evidence>
<evidence type="ECO:0000305" key="2"/>
<comment type="function">
    <text evidence="1">Involved in mRNA degradation. Catalyzes the phosphorolysis of single-stranded polyribonucleotides processively in the 3'- to 5'-direction.</text>
</comment>
<comment type="catalytic activity">
    <reaction evidence="1">
        <text>RNA(n+1) + phosphate = RNA(n) + a ribonucleoside 5'-diphosphate</text>
        <dbReference type="Rhea" id="RHEA:22096"/>
        <dbReference type="Rhea" id="RHEA-COMP:14527"/>
        <dbReference type="Rhea" id="RHEA-COMP:17342"/>
        <dbReference type="ChEBI" id="CHEBI:43474"/>
        <dbReference type="ChEBI" id="CHEBI:57930"/>
        <dbReference type="ChEBI" id="CHEBI:140395"/>
        <dbReference type="EC" id="2.7.7.8"/>
    </reaction>
</comment>
<comment type="cofactor">
    <cofactor evidence="1">
        <name>Mg(2+)</name>
        <dbReference type="ChEBI" id="CHEBI:18420"/>
    </cofactor>
</comment>
<comment type="subcellular location">
    <subcellularLocation>
        <location evidence="1">Cytoplasm</location>
    </subcellularLocation>
</comment>
<comment type="similarity">
    <text evidence="1">Belongs to the polyribonucleotide nucleotidyltransferase family.</text>
</comment>
<feature type="chain" id="PRO_0000329579" description="Polyribonucleotide nucleotidyltransferase">
    <location>
        <begin position="1"/>
        <end position="694"/>
    </location>
</feature>
<feature type="domain" description="KH" evidence="1">
    <location>
        <begin position="553"/>
        <end position="612"/>
    </location>
</feature>
<feature type="domain" description="S1 motif" evidence="1">
    <location>
        <begin position="622"/>
        <end position="690"/>
    </location>
</feature>
<feature type="binding site" evidence="1">
    <location>
        <position position="486"/>
    </location>
    <ligand>
        <name>Mg(2+)</name>
        <dbReference type="ChEBI" id="CHEBI:18420"/>
    </ligand>
</feature>
<feature type="binding site" evidence="1">
    <location>
        <position position="492"/>
    </location>
    <ligand>
        <name>Mg(2+)</name>
        <dbReference type="ChEBI" id="CHEBI:18420"/>
    </ligand>
</feature>
<feature type="sequence conflict" description="In Ref. 4; AAP98966." evidence="2" ref="4">
    <original>V</original>
    <variation>I</variation>
    <location>
        <position position="225"/>
    </location>
</feature>
<name>PNP_CHLPN</name>